<protein>
    <recommendedName>
        <fullName>Zinc finger CCCH domain-containing protein 15 homolog</fullName>
    </recommendedName>
</protein>
<organism>
    <name type="scientific">Caenorhabditis elegans</name>
    <dbReference type="NCBI Taxonomy" id="6239"/>
    <lineage>
        <taxon>Eukaryota</taxon>
        <taxon>Metazoa</taxon>
        <taxon>Ecdysozoa</taxon>
        <taxon>Nematoda</taxon>
        <taxon>Chromadorea</taxon>
        <taxon>Rhabditida</taxon>
        <taxon>Rhabditina</taxon>
        <taxon>Rhabditomorpha</taxon>
        <taxon>Rhabditoidea</taxon>
        <taxon>Rhabditidae</taxon>
        <taxon>Peloderinae</taxon>
        <taxon>Caenorhabditis</taxon>
    </lineage>
</organism>
<name>ZC3HF_CAEEL</name>
<gene>
    <name type="ORF">F27D4.4</name>
</gene>
<dbReference type="EMBL" id="Z79695">
    <property type="protein sequence ID" value="CAB01969.3"/>
    <property type="molecule type" value="Genomic_DNA"/>
</dbReference>
<dbReference type="RefSeq" id="NP_001040656.2">
    <property type="nucleotide sequence ID" value="NM_001047191.7"/>
</dbReference>
<dbReference type="SMR" id="Q93618"/>
<dbReference type="BioGRID" id="37979">
    <property type="interactions" value="5"/>
</dbReference>
<dbReference type="FunCoup" id="Q93618">
    <property type="interactions" value="3362"/>
</dbReference>
<dbReference type="STRING" id="6239.F27D4.4a.1"/>
<dbReference type="PaxDb" id="6239-F27D4.4a"/>
<dbReference type="PeptideAtlas" id="Q93618"/>
<dbReference type="EnsemblMetazoa" id="F27D4.4a.1">
    <property type="protein sequence ID" value="F27D4.4a.1"/>
    <property type="gene ID" value="WBGene00009189"/>
</dbReference>
<dbReference type="GeneID" id="172538"/>
<dbReference type="KEGG" id="cel:CELE_F27D4.4"/>
<dbReference type="UCSC" id="F27D4.4a.1">
    <property type="organism name" value="c. elegans"/>
</dbReference>
<dbReference type="AGR" id="WB:WBGene00009189"/>
<dbReference type="CTD" id="172538"/>
<dbReference type="WormBase" id="F27D4.4a">
    <property type="protein sequence ID" value="CE41229"/>
    <property type="gene ID" value="WBGene00009189"/>
</dbReference>
<dbReference type="eggNOG" id="KOG1763">
    <property type="taxonomic scope" value="Eukaryota"/>
</dbReference>
<dbReference type="GeneTree" id="ENSGT00390000015818"/>
<dbReference type="HOGENOM" id="CLU_042870_1_0_1"/>
<dbReference type="InParanoid" id="Q93618"/>
<dbReference type="OMA" id="AMIFKPV"/>
<dbReference type="OrthoDB" id="278280at2759"/>
<dbReference type="PhylomeDB" id="Q93618"/>
<dbReference type="PRO" id="PR:Q93618"/>
<dbReference type="Proteomes" id="UP000001940">
    <property type="component" value="Chromosome I"/>
</dbReference>
<dbReference type="Bgee" id="WBGene00009189">
    <property type="expression patterns" value="Expressed in adult organism and 4 other cell types or tissues"/>
</dbReference>
<dbReference type="ExpressionAtlas" id="Q93618">
    <property type="expression patterns" value="baseline and differential"/>
</dbReference>
<dbReference type="GO" id="GO:0005829">
    <property type="term" value="C:cytosol"/>
    <property type="evidence" value="ECO:0000318"/>
    <property type="project" value="GO_Central"/>
</dbReference>
<dbReference type="GO" id="GO:0008270">
    <property type="term" value="F:zinc ion binding"/>
    <property type="evidence" value="ECO:0007669"/>
    <property type="project" value="UniProtKB-KW"/>
</dbReference>
<dbReference type="GO" id="GO:0002181">
    <property type="term" value="P:cytoplasmic translation"/>
    <property type="evidence" value="ECO:0000318"/>
    <property type="project" value="GO_Central"/>
</dbReference>
<dbReference type="Gene3D" id="6.20.400.10">
    <property type="match status" value="1"/>
</dbReference>
<dbReference type="Gene3D" id="4.10.1000.10">
    <property type="entry name" value="Zinc finger, CCCH-type"/>
    <property type="match status" value="1"/>
</dbReference>
<dbReference type="InterPro" id="IPR032378">
    <property type="entry name" value="ZC3H15/TMA46_C"/>
</dbReference>
<dbReference type="InterPro" id="IPR000571">
    <property type="entry name" value="Znf_CCCH"/>
</dbReference>
<dbReference type="InterPro" id="IPR036855">
    <property type="entry name" value="Znf_CCCH_sf"/>
</dbReference>
<dbReference type="PANTHER" id="PTHR12681:SF0">
    <property type="entry name" value="ZINC FINGER CCCH DOMAIN-CONTAINING PROTEIN 15"/>
    <property type="match status" value="1"/>
</dbReference>
<dbReference type="PANTHER" id="PTHR12681">
    <property type="entry name" value="ZINC FINGER-CONTAINING PROTEIN P48ZNF"/>
    <property type="match status" value="1"/>
</dbReference>
<dbReference type="Pfam" id="PF16543">
    <property type="entry name" value="DFRP_C"/>
    <property type="match status" value="1"/>
</dbReference>
<dbReference type="Pfam" id="PF00642">
    <property type="entry name" value="zf-CCCH"/>
    <property type="match status" value="1"/>
</dbReference>
<dbReference type="SMART" id="SM00356">
    <property type="entry name" value="ZnF_C3H1"/>
    <property type="match status" value="2"/>
</dbReference>
<dbReference type="SUPFAM" id="SSF90229">
    <property type="entry name" value="CCCH zinc finger"/>
    <property type="match status" value="1"/>
</dbReference>
<dbReference type="PROSITE" id="PS50103">
    <property type="entry name" value="ZF_C3H1"/>
    <property type="match status" value="2"/>
</dbReference>
<reference key="1">
    <citation type="journal article" date="1998" name="Science">
        <title>Genome sequence of the nematode C. elegans: a platform for investigating biology.</title>
        <authorList>
            <consortium name="The C. elegans sequencing consortium"/>
        </authorList>
    </citation>
    <scope>NUCLEOTIDE SEQUENCE [LARGE SCALE GENOMIC DNA]</scope>
    <source>
        <strain>Bristol N2</strain>
    </source>
</reference>
<comment type="similarity">
    <text evidence="3">Belongs to the ZC3H15/TMA46 family.</text>
</comment>
<accession>Q93618</accession>
<proteinExistence type="inferred from homology"/>
<feature type="chain" id="PRO_0000324651" description="Zinc finger CCCH domain-containing protein 15 homolog">
    <location>
        <begin position="1"/>
        <end position="374"/>
    </location>
</feature>
<feature type="zinc finger region" description="C3H1-type 1" evidence="1">
    <location>
        <begin position="90"/>
        <end position="117"/>
    </location>
</feature>
<feature type="zinc finger region" description="C3H1-type 2" evidence="1">
    <location>
        <begin position="166"/>
        <end position="199"/>
    </location>
</feature>
<feature type="region of interest" description="Disordered" evidence="2">
    <location>
        <begin position="1"/>
        <end position="20"/>
    </location>
</feature>
<feature type="compositionally biased region" description="Basic and acidic residues" evidence="2">
    <location>
        <begin position="10"/>
        <end position="20"/>
    </location>
</feature>
<sequence>MPPKQQGPSKKSEQKRKEKVIEDKTFGLKNKKGNKNQKFVAQVENQVRNNNTRMDLVRQQEAAKKKEKDELLDIANLLKPVEQKVAKDVDPKSLLCVFFKQGLCGKGAKCKFSHDLAVAQKTAKKNLYADSREVEKDEETNENWDSDKLNEVVNKKNKNKHMIDIVCKYFLEAVENNKYGWFWECPNGGEKCQYRHCLPEGYVLKKERKAMEQQKEDEISIEELVEKERAALSSKNLTKLTLQTFIAWKKKKLRERKEKEEADLKEKKEKIKSGKHNGMSGRDLFLYDANLVNNDDDEAGDIEMEKEEVDENEKVFEIDANFFKFDGMDDELTDQMSKSSTAVESTAKGMAKMDINEDLFDIDEDVENLDSDED</sequence>
<evidence type="ECO:0000255" key="1">
    <source>
        <dbReference type="PROSITE-ProRule" id="PRU00723"/>
    </source>
</evidence>
<evidence type="ECO:0000256" key="2">
    <source>
        <dbReference type="SAM" id="MobiDB-lite"/>
    </source>
</evidence>
<evidence type="ECO:0000305" key="3"/>
<keyword id="KW-0479">Metal-binding</keyword>
<keyword id="KW-1185">Reference proteome</keyword>
<keyword id="KW-0677">Repeat</keyword>
<keyword id="KW-0862">Zinc</keyword>
<keyword id="KW-0863">Zinc-finger</keyword>